<proteinExistence type="inferred from homology"/>
<dbReference type="EC" id="2.8.4.3" evidence="1"/>
<dbReference type="EMBL" id="CP000236">
    <property type="protein sequence ID" value="ABD45127.1"/>
    <property type="molecule type" value="Genomic_DNA"/>
</dbReference>
<dbReference type="RefSeq" id="WP_011452841.1">
    <property type="nucleotide sequence ID" value="NC_007799.1"/>
</dbReference>
<dbReference type="SMR" id="Q2GG00"/>
<dbReference type="STRING" id="205920.ECH_0837"/>
<dbReference type="KEGG" id="ech:ECH_0837"/>
<dbReference type="eggNOG" id="COG0621">
    <property type="taxonomic scope" value="Bacteria"/>
</dbReference>
<dbReference type="HOGENOM" id="CLU_018697_2_0_5"/>
<dbReference type="OrthoDB" id="9805215at2"/>
<dbReference type="Proteomes" id="UP000008320">
    <property type="component" value="Chromosome"/>
</dbReference>
<dbReference type="GO" id="GO:0005829">
    <property type="term" value="C:cytosol"/>
    <property type="evidence" value="ECO:0007669"/>
    <property type="project" value="TreeGrafter"/>
</dbReference>
<dbReference type="GO" id="GO:0051539">
    <property type="term" value="F:4 iron, 4 sulfur cluster binding"/>
    <property type="evidence" value="ECO:0007669"/>
    <property type="project" value="UniProtKB-UniRule"/>
</dbReference>
<dbReference type="GO" id="GO:0046872">
    <property type="term" value="F:metal ion binding"/>
    <property type="evidence" value="ECO:0007669"/>
    <property type="project" value="UniProtKB-KW"/>
</dbReference>
<dbReference type="GO" id="GO:0035597">
    <property type="term" value="F:N6-isopentenyladenosine methylthiotransferase activity"/>
    <property type="evidence" value="ECO:0007669"/>
    <property type="project" value="TreeGrafter"/>
</dbReference>
<dbReference type="CDD" id="cd01335">
    <property type="entry name" value="Radical_SAM"/>
    <property type="match status" value="1"/>
</dbReference>
<dbReference type="FunFam" id="3.40.50.12160:FF:000003">
    <property type="entry name" value="CDK5 regulatory subunit-associated protein 1"/>
    <property type="match status" value="1"/>
</dbReference>
<dbReference type="FunFam" id="3.80.30.20:FF:000001">
    <property type="entry name" value="tRNA-2-methylthio-N(6)-dimethylallyladenosine synthase 2"/>
    <property type="match status" value="1"/>
</dbReference>
<dbReference type="Gene3D" id="3.40.50.12160">
    <property type="entry name" value="Methylthiotransferase, N-terminal domain"/>
    <property type="match status" value="1"/>
</dbReference>
<dbReference type="Gene3D" id="3.80.30.20">
    <property type="entry name" value="tm_1862 like domain"/>
    <property type="match status" value="1"/>
</dbReference>
<dbReference type="HAMAP" id="MF_01864">
    <property type="entry name" value="tRNA_metthiotr_MiaB"/>
    <property type="match status" value="1"/>
</dbReference>
<dbReference type="InterPro" id="IPR006638">
    <property type="entry name" value="Elp3/MiaA/NifB-like_rSAM"/>
</dbReference>
<dbReference type="InterPro" id="IPR005839">
    <property type="entry name" value="Methylthiotransferase"/>
</dbReference>
<dbReference type="InterPro" id="IPR020612">
    <property type="entry name" value="Methylthiotransferase_CS"/>
</dbReference>
<dbReference type="InterPro" id="IPR013848">
    <property type="entry name" value="Methylthiotransferase_N"/>
</dbReference>
<dbReference type="InterPro" id="IPR038135">
    <property type="entry name" value="Methylthiotransferase_N_sf"/>
</dbReference>
<dbReference type="InterPro" id="IPR006463">
    <property type="entry name" value="MiaB_methiolase"/>
</dbReference>
<dbReference type="InterPro" id="IPR007197">
    <property type="entry name" value="rSAM"/>
</dbReference>
<dbReference type="InterPro" id="IPR023404">
    <property type="entry name" value="rSAM_horseshoe"/>
</dbReference>
<dbReference type="NCBIfam" id="TIGR01574">
    <property type="entry name" value="miaB-methiolase"/>
    <property type="match status" value="1"/>
</dbReference>
<dbReference type="NCBIfam" id="TIGR00089">
    <property type="entry name" value="MiaB/RimO family radical SAM methylthiotransferase"/>
    <property type="match status" value="1"/>
</dbReference>
<dbReference type="PANTHER" id="PTHR43020">
    <property type="entry name" value="CDK5 REGULATORY SUBUNIT-ASSOCIATED PROTEIN 1"/>
    <property type="match status" value="1"/>
</dbReference>
<dbReference type="PANTHER" id="PTHR43020:SF2">
    <property type="entry name" value="MITOCHONDRIAL TRNA METHYLTHIOTRANSFERASE CDK5RAP1"/>
    <property type="match status" value="1"/>
</dbReference>
<dbReference type="Pfam" id="PF04055">
    <property type="entry name" value="Radical_SAM"/>
    <property type="match status" value="1"/>
</dbReference>
<dbReference type="Pfam" id="PF00919">
    <property type="entry name" value="UPF0004"/>
    <property type="match status" value="1"/>
</dbReference>
<dbReference type="SFLD" id="SFLDF00273">
    <property type="entry name" value="(dimethylallyl)adenosine_tRNA"/>
    <property type="match status" value="1"/>
</dbReference>
<dbReference type="SFLD" id="SFLDG01082">
    <property type="entry name" value="B12-binding_domain_containing"/>
    <property type="match status" value="1"/>
</dbReference>
<dbReference type="SFLD" id="SFLDG01061">
    <property type="entry name" value="methylthiotransferase"/>
    <property type="match status" value="1"/>
</dbReference>
<dbReference type="SMART" id="SM00729">
    <property type="entry name" value="Elp3"/>
    <property type="match status" value="1"/>
</dbReference>
<dbReference type="SUPFAM" id="SSF102114">
    <property type="entry name" value="Radical SAM enzymes"/>
    <property type="match status" value="1"/>
</dbReference>
<dbReference type="PROSITE" id="PS51449">
    <property type="entry name" value="MTTASE_N"/>
    <property type="match status" value="1"/>
</dbReference>
<dbReference type="PROSITE" id="PS01278">
    <property type="entry name" value="MTTASE_RADICAL"/>
    <property type="match status" value="1"/>
</dbReference>
<dbReference type="PROSITE" id="PS51918">
    <property type="entry name" value="RADICAL_SAM"/>
    <property type="match status" value="1"/>
</dbReference>
<keyword id="KW-0004">4Fe-4S</keyword>
<keyword id="KW-0963">Cytoplasm</keyword>
<keyword id="KW-0408">Iron</keyword>
<keyword id="KW-0411">Iron-sulfur</keyword>
<keyword id="KW-0479">Metal-binding</keyword>
<keyword id="KW-1185">Reference proteome</keyword>
<keyword id="KW-0949">S-adenosyl-L-methionine</keyword>
<keyword id="KW-0808">Transferase</keyword>
<keyword id="KW-0819">tRNA processing</keyword>
<evidence type="ECO:0000255" key="1">
    <source>
        <dbReference type="HAMAP-Rule" id="MF_01864"/>
    </source>
</evidence>
<evidence type="ECO:0000255" key="2">
    <source>
        <dbReference type="PROSITE-ProRule" id="PRU01266"/>
    </source>
</evidence>
<sequence length="442" mass="50639">MQGLYIKSYGCQMNVYDSLIMENIIKPLGFTVVNEPSEANIVILNTCHIREKASEKLYSELGKMRKIQETKDLTIVVAGCVAQAEGEQIFARAPFVDIVVGPQSIHTLPELIIKARRMKKQVINIDFPIISKFDAIPVEEYTKNQEVSAFISVQEGCNKFCTFCVVPYTRGEEYSRTVEAIFNEALVLSDSGVKEITLIGQNVNAYHGTYKGCEWDLGKLIQYLAKIPNIERIRYTTSHPRDMHQSLYEAHRSETKLMPFVHLPIQSGSDRILKKMNRKHTAEEYIDIINNLRKQRPDIAFSSDFIVGFPGETEEDFEHTMKLVQEVNFSQAYSFKYSPRPGTPSAEYPNQIPEEIKSQRIFRLQELLREQQLAFNRNMIGQTCSVLFNNKKGKFDNQIIGKTEYMQSCYINTDNTNQFYNSILPIKIIDAYQNSVTGIVVN</sequence>
<organism>
    <name type="scientific">Ehrlichia chaffeensis (strain ATCC CRL-10679 / Arkansas)</name>
    <dbReference type="NCBI Taxonomy" id="205920"/>
    <lineage>
        <taxon>Bacteria</taxon>
        <taxon>Pseudomonadati</taxon>
        <taxon>Pseudomonadota</taxon>
        <taxon>Alphaproteobacteria</taxon>
        <taxon>Rickettsiales</taxon>
        <taxon>Anaplasmataceae</taxon>
        <taxon>Ehrlichia</taxon>
    </lineage>
</organism>
<gene>
    <name evidence="1" type="primary">miaB</name>
    <name type="ordered locus">ECH_0837</name>
</gene>
<name>MIAB_EHRCR</name>
<reference key="1">
    <citation type="journal article" date="2006" name="PLoS Genet.">
        <title>Comparative genomics of emerging human ehrlichiosis agents.</title>
        <authorList>
            <person name="Dunning Hotopp J.C."/>
            <person name="Lin M."/>
            <person name="Madupu R."/>
            <person name="Crabtree J."/>
            <person name="Angiuoli S.V."/>
            <person name="Eisen J.A."/>
            <person name="Seshadri R."/>
            <person name="Ren Q."/>
            <person name="Wu M."/>
            <person name="Utterback T.R."/>
            <person name="Smith S."/>
            <person name="Lewis M."/>
            <person name="Khouri H."/>
            <person name="Zhang C."/>
            <person name="Niu H."/>
            <person name="Lin Q."/>
            <person name="Ohashi N."/>
            <person name="Zhi N."/>
            <person name="Nelson W.C."/>
            <person name="Brinkac L.M."/>
            <person name="Dodson R.J."/>
            <person name="Rosovitz M.J."/>
            <person name="Sundaram J.P."/>
            <person name="Daugherty S.C."/>
            <person name="Davidsen T."/>
            <person name="Durkin A.S."/>
            <person name="Gwinn M.L."/>
            <person name="Haft D.H."/>
            <person name="Selengut J.D."/>
            <person name="Sullivan S.A."/>
            <person name="Zafar N."/>
            <person name="Zhou L."/>
            <person name="Benahmed F."/>
            <person name="Forberger H."/>
            <person name="Halpin R."/>
            <person name="Mulligan S."/>
            <person name="Robinson J."/>
            <person name="White O."/>
            <person name="Rikihisa Y."/>
            <person name="Tettelin H."/>
        </authorList>
    </citation>
    <scope>NUCLEOTIDE SEQUENCE [LARGE SCALE GENOMIC DNA]</scope>
    <source>
        <strain>ATCC CRL-10679 / Arkansas</strain>
    </source>
</reference>
<protein>
    <recommendedName>
        <fullName evidence="1">tRNA-2-methylthio-N(6)-dimethylallyladenosine synthase</fullName>
        <ecNumber evidence="1">2.8.4.3</ecNumber>
    </recommendedName>
    <alternativeName>
        <fullName evidence="1">(Dimethylallyl)adenosine tRNA methylthiotransferase MiaB</fullName>
    </alternativeName>
    <alternativeName>
        <fullName evidence="1">tRNA-i(6)A37 methylthiotransferase</fullName>
    </alternativeName>
</protein>
<comment type="function">
    <text evidence="1">Catalyzes the methylthiolation of N6-(dimethylallyl)adenosine (i(6)A), leading to the formation of 2-methylthio-N6-(dimethylallyl)adenosine (ms(2)i(6)A) at position 37 in tRNAs that read codons beginning with uridine.</text>
</comment>
<comment type="catalytic activity">
    <reaction evidence="1">
        <text>N(6)-dimethylallyladenosine(37) in tRNA + (sulfur carrier)-SH + AH2 + 2 S-adenosyl-L-methionine = 2-methylsulfanyl-N(6)-dimethylallyladenosine(37) in tRNA + (sulfur carrier)-H + 5'-deoxyadenosine + L-methionine + A + S-adenosyl-L-homocysteine + 2 H(+)</text>
        <dbReference type="Rhea" id="RHEA:37067"/>
        <dbReference type="Rhea" id="RHEA-COMP:10375"/>
        <dbReference type="Rhea" id="RHEA-COMP:10376"/>
        <dbReference type="Rhea" id="RHEA-COMP:14737"/>
        <dbReference type="Rhea" id="RHEA-COMP:14739"/>
        <dbReference type="ChEBI" id="CHEBI:13193"/>
        <dbReference type="ChEBI" id="CHEBI:15378"/>
        <dbReference type="ChEBI" id="CHEBI:17319"/>
        <dbReference type="ChEBI" id="CHEBI:17499"/>
        <dbReference type="ChEBI" id="CHEBI:29917"/>
        <dbReference type="ChEBI" id="CHEBI:57844"/>
        <dbReference type="ChEBI" id="CHEBI:57856"/>
        <dbReference type="ChEBI" id="CHEBI:59789"/>
        <dbReference type="ChEBI" id="CHEBI:64428"/>
        <dbReference type="ChEBI" id="CHEBI:74415"/>
        <dbReference type="ChEBI" id="CHEBI:74417"/>
        <dbReference type="EC" id="2.8.4.3"/>
    </reaction>
</comment>
<comment type="cofactor">
    <cofactor evidence="1">
        <name>[4Fe-4S] cluster</name>
        <dbReference type="ChEBI" id="CHEBI:49883"/>
    </cofactor>
    <text evidence="1">Binds 2 [4Fe-4S] clusters. One cluster is coordinated with 3 cysteines and an exchangeable S-adenosyl-L-methionine.</text>
</comment>
<comment type="subunit">
    <text evidence="1">Monomer.</text>
</comment>
<comment type="subcellular location">
    <subcellularLocation>
        <location evidence="1">Cytoplasm</location>
    </subcellularLocation>
</comment>
<comment type="similarity">
    <text evidence="1">Belongs to the methylthiotransferase family. MiaB subfamily.</text>
</comment>
<accession>Q2GG00</accession>
<feature type="chain" id="PRO_0000374273" description="tRNA-2-methylthio-N(6)-dimethylallyladenosine synthase">
    <location>
        <begin position="1"/>
        <end position="442"/>
    </location>
</feature>
<feature type="domain" description="MTTase N-terminal" evidence="1">
    <location>
        <begin position="2"/>
        <end position="117"/>
    </location>
</feature>
<feature type="domain" description="Radical SAM core" evidence="2">
    <location>
        <begin position="143"/>
        <end position="374"/>
    </location>
</feature>
<feature type="domain" description="TRAM" evidence="1">
    <location>
        <begin position="377"/>
        <end position="442"/>
    </location>
</feature>
<feature type="binding site" evidence="1">
    <location>
        <position position="11"/>
    </location>
    <ligand>
        <name>[4Fe-4S] cluster</name>
        <dbReference type="ChEBI" id="CHEBI:49883"/>
        <label>1</label>
    </ligand>
</feature>
<feature type="binding site" evidence="1">
    <location>
        <position position="47"/>
    </location>
    <ligand>
        <name>[4Fe-4S] cluster</name>
        <dbReference type="ChEBI" id="CHEBI:49883"/>
        <label>1</label>
    </ligand>
</feature>
<feature type="binding site" evidence="1">
    <location>
        <position position="80"/>
    </location>
    <ligand>
        <name>[4Fe-4S] cluster</name>
        <dbReference type="ChEBI" id="CHEBI:49883"/>
        <label>1</label>
    </ligand>
</feature>
<feature type="binding site" evidence="1">
    <location>
        <position position="157"/>
    </location>
    <ligand>
        <name>[4Fe-4S] cluster</name>
        <dbReference type="ChEBI" id="CHEBI:49883"/>
        <label>2</label>
        <note>4Fe-4S-S-AdoMet</note>
    </ligand>
</feature>
<feature type="binding site" evidence="1">
    <location>
        <position position="161"/>
    </location>
    <ligand>
        <name>[4Fe-4S] cluster</name>
        <dbReference type="ChEBI" id="CHEBI:49883"/>
        <label>2</label>
        <note>4Fe-4S-S-AdoMet</note>
    </ligand>
</feature>
<feature type="binding site" evidence="1">
    <location>
        <position position="164"/>
    </location>
    <ligand>
        <name>[4Fe-4S] cluster</name>
        <dbReference type="ChEBI" id="CHEBI:49883"/>
        <label>2</label>
        <note>4Fe-4S-S-AdoMet</note>
    </ligand>
</feature>